<sequence>MRWEKPSYNDMRFGFEVTMYIYNR</sequence>
<name>PQQA_METCA</name>
<keyword id="KW-0884">PQQ biosynthesis</keyword>
<keyword id="KW-1185">Reference proteome</keyword>
<reference key="1">
    <citation type="journal article" date="2004" name="PLoS Biol.">
        <title>Genomic insights into methanotrophy: the complete genome sequence of Methylococcus capsulatus (Bath).</title>
        <authorList>
            <person name="Ward N.L."/>
            <person name="Larsen O."/>
            <person name="Sakwa J."/>
            <person name="Bruseth L."/>
            <person name="Khouri H.M."/>
            <person name="Durkin A.S."/>
            <person name="Dimitrov G."/>
            <person name="Jiang L."/>
            <person name="Scanlan D."/>
            <person name="Kang K.H."/>
            <person name="Lewis M.R."/>
            <person name="Nelson K.E."/>
            <person name="Methe B.A."/>
            <person name="Wu M."/>
            <person name="Heidelberg J.F."/>
            <person name="Paulsen I.T."/>
            <person name="Fouts D.E."/>
            <person name="Ravel J."/>
            <person name="Tettelin H."/>
            <person name="Ren Q."/>
            <person name="Read T.D."/>
            <person name="DeBoy R.T."/>
            <person name="Seshadri R."/>
            <person name="Salzberg S.L."/>
            <person name="Jensen H.B."/>
            <person name="Birkeland N.K."/>
            <person name="Nelson W.C."/>
            <person name="Dodson R.J."/>
            <person name="Grindhaug S.H."/>
            <person name="Holt I.E."/>
            <person name="Eidhammer I."/>
            <person name="Jonasen I."/>
            <person name="Vanaken S."/>
            <person name="Utterback T.R."/>
            <person name="Feldblyum T.V."/>
            <person name="Fraser C.M."/>
            <person name="Lillehaug J.R."/>
            <person name="Eisen J.A."/>
        </authorList>
    </citation>
    <scope>NUCLEOTIDE SEQUENCE [LARGE SCALE GENOMIC DNA]</scope>
    <source>
        <strain>ATCC 33009 / NCIMB 11132 / Bath</strain>
    </source>
</reference>
<organism>
    <name type="scientific">Methylococcus capsulatus (strain ATCC 33009 / NCIMB 11132 / Bath)</name>
    <dbReference type="NCBI Taxonomy" id="243233"/>
    <lineage>
        <taxon>Bacteria</taxon>
        <taxon>Pseudomonadati</taxon>
        <taxon>Pseudomonadota</taxon>
        <taxon>Gammaproteobacteria</taxon>
        <taxon>Methylococcales</taxon>
        <taxon>Methylococcaceae</taxon>
        <taxon>Methylococcus</taxon>
    </lineage>
</organism>
<feature type="chain" id="PRO_0000220310" description="Coenzyme PQQ synthesis protein A">
    <location>
        <begin position="1"/>
        <end position="24"/>
    </location>
</feature>
<feature type="cross-link" description="Pyrroloquinoline quinone (Glu-Tyr)" evidence="1">
    <location>
        <begin position="16"/>
        <end position="20"/>
    </location>
</feature>
<proteinExistence type="inferred from homology"/>
<accession>Q608P4</accession>
<gene>
    <name evidence="1" type="primary">pqqA</name>
    <name type="ordered locus">MCA1445.1</name>
</gene>
<comment type="function">
    <text evidence="1">Required for coenzyme pyrroloquinoline quinone (PQQ) biosynthesis. PQQ is probably formed by cross-linking a specific glutamate to a specific tyrosine residue and excising these residues from the peptide.</text>
</comment>
<comment type="pathway">
    <text evidence="1">Cofactor biosynthesis; pyrroloquinoline quinone biosynthesis.</text>
</comment>
<comment type="similarity">
    <text evidence="1">Belongs to the PqqA family.</text>
</comment>
<dbReference type="EMBL" id="AE017282">
    <property type="protein sequence ID" value="AAU93280.1"/>
    <property type="molecule type" value="Genomic_DNA"/>
</dbReference>
<dbReference type="STRING" id="243233.MCA1445.1"/>
<dbReference type="KEGG" id="mca:MCA1445.1"/>
<dbReference type="HOGENOM" id="CLU_219131_0_0_6"/>
<dbReference type="UniPathway" id="UPA00539"/>
<dbReference type="Proteomes" id="UP000006821">
    <property type="component" value="Chromosome"/>
</dbReference>
<dbReference type="GO" id="GO:0018189">
    <property type="term" value="P:pyrroloquinoline quinone biosynthetic process"/>
    <property type="evidence" value="ECO:0007669"/>
    <property type="project" value="UniProtKB-UniRule"/>
</dbReference>
<dbReference type="HAMAP" id="MF_00656">
    <property type="entry name" value="PQQ_syn_PqqA"/>
    <property type="match status" value="1"/>
</dbReference>
<dbReference type="InterPro" id="IPR011725">
    <property type="entry name" value="PQQ_synth_PqqA"/>
</dbReference>
<dbReference type="NCBIfam" id="TIGR02107">
    <property type="entry name" value="PQQ_syn_pqqA"/>
    <property type="match status" value="1"/>
</dbReference>
<dbReference type="Pfam" id="PF08042">
    <property type="entry name" value="PqqA"/>
    <property type="match status" value="1"/>
</dbReference>
<evidence type="ECO:0000255" key="1">
    <source>
        <dbReference type="HAMAP-Rule" id="MF_00656"/>
    </source>
</evidence>
<protein>
    <recommendedName>
        <fullName evidence="1">Coenzyme PQQ synthesis protein A</fullName>
    </recommendedName>
    <alternativeName>
        <fullName evidence="1">Pyrroloquinoline quinone biosynthesis protein A</fullName>
    </alternativeName>
</protein>